<organism>
    <name type="scientific">Homo sapiens</name>
    <name type="common">Human</name>
    <dbReference type="NCBI Taxonomy" id="9606"/>
    <lineage>
        <taxon>Eukaryota</taxon>
        <taxon>Metazoa</taxon>
        <taxon>Chordata</taxon>
        <taxon>Craniata</taxon>
        <taxon>Vertebrata</taxon>
        <taxon>Euteleostomi</taxon>
        <taxon>Mammalia</taxon>
        <taxon>Eutheria</taxon>
        <taxon>Euarchontoglires</taxon>
        <taxon>Primates</taxon>
        <taxon>Haplorrhini</taxon>
        <taxon>Catarrhini</taxon>
        <taxon>Hominidae</taxon>
        <taxon>Homo</taxon>
    </lineage>
</organism>
<proteinExistence type="evidence at protein level"/>
<protein>
    <recommendedName>
        <fullName>Kinesin-like protein KIF13B</fullName>
    </recommendedName>
    <alternativeName>
        <fullName>Kinesin-like protein GAKIN</fullName>
    </alternativeName>
</protein>
<comment type="function">
    <text evidence="6">Involved in reorganization of the cortical cytoskeleton. Regulates axon formation by promoting the formation of extra axons. May be functionally important for the intracellular trafficking of MAGUKs and associated protein complexes.</text>
</comment>
<comment type="subunit">
    <text evidence="5 6">Binds to DLG1 and DLG4. Interacts (when phosphorylated at Ser-1381 and Ser-1410) with 14-3-3.</text>
</comment>
<comment type="interaction">
    <interactant intactId="EBI-766408">
        <id>Q9NQT8</id>
    </interactant>
    <interactant intactId="EBI-714732">
        <id>O75689</id>
        <label>ADAP1</label>
    </interactant>
    <organismsDiffer>false</organismsDiffer>
    <experiments>6</experiments>
</comment>
<comment type="interaction">
    <interactant intactId="EBI-766408">
        <id>Q9NQT8</id>
    </interactant>
    <interactant intactId="EBI-357500">
        <id>Q12959-2</id>
        <label>DLG1</label>
    </interactant>
    <organismsDiffer>false</organismsDiffer>
    <experiments>3</experiments>
</comment>
<comment type="subcellular location">
    <subcellularLocation>
        <location evidence="6">Cytoplasm</location>
        <location evidence="6">Cytoskeleton</location>
    </subcellularLocation>
    <subcellularLocation>
        <location evidence="6">Cell projection</location>
        <location evidence="6">Axon</location>
    </subcellularLocation>
    <text>accumulates at the distal part of the microtubules in the tips of axons, but not of dendrites.</text>
</comment>
<comment type="alternative products">
    <event type="alternative splicing"/>
    <isoform>
        <id>Q9NQT8-1</id>
        <name>1</name>
        <sequence type="displayed"/>
    </isoform>
    <isoform>
        <id>Q9NQT8-2</id>
        <name>2</name>
        <sequence type="described" ref="VSP_056360 VSP_056361"/>
    </isoform>
</comment>
<comment type="tissue specificity">
    <text>Ubiquitous.</text>
</comment>
<comment type="PTM">
    <text evidence="6">Phosphorylated at Ser-1381 and Ser-1410 by MARK2, promoting interaction with 14-3-3 and inhibiting microtubule-dependent accumulation and formation of axons.</text>
</comment>
<comment type="similarity">
    <text evidence="3">Belongs to the TRAFAC class myosin-kinesin ATPase superfamily. Kinesin family.</text>
</comment>
<comment type="sequence caution" evidence="8">
    <conflict type="erroneous initiation">
        <sequence resource="EMBL-CDS" id="BAA31614"/>
    </conflict>
    <text>Extended N-terminus.</text>
</comment>
<keyword id="KW-0002">3D-structure</keyword>
<keyword id="KW-0025">Alternative splicing</keyword>
<keyword id="KW-0067">ATP-binding</keyword>
<keyword id="KW-0966">Cell projection</keyword>
<keyword id="KW-0175">Coiled coil</keyword>
<keyword id="KW-0963">Cytoplasm</keyword>
<keyword id="KW-0206">Cytoskeleton</keyword>
<keyword id="KW-0493">Microtubule</keyword>
<keyword id="KW-0505">Motor protein</keyword>
<keyword id="KW-0547">Nucleotide-binding</keyword>
<keyword id="KW-0597">Phosphoprotein</keyword>
<keyword id="KW-1267">Proteomics identification</keyword>
<keyword id="KW-1185">Reference proteome</keyword>
<reference key="1">
    <citation type="journal article" date="2000" name="J. Biol. Chem.">
        <title>GAKIN, a novel kinesin-like protein associates with the human homologue of the Drosophila discs large tumor suppressor in T lymphocytes.</title>
        <authorList>
            <person name="Hanada T."/>
            <person name="Lin L."/>
            <person name="Tibaldi E.V."/>
            <person name="Reinherz E.L."/>
            <person name="Chishti A.H."/>
        </authorList>
    </citation>
    <scope>NUCLEOTIDE SEQUENCE [MRNA] (ISOFORM 1)</scope>
    <scope>INTERACTION WITH DLG1 AND DLG4</scope>
</reference>
<reference key="2">
    <citation type="journal article" date="1998" name="DNA Res.">
        <title>Prediction of the coding sequences of unidentified human genes. X. The complete sequences of 100 new cDNA clones from brain which can code for large proteins in vitro.</title>
        <authorList>
            <person name="Ishikawa K."/>
            <person name="Nagase T."/>
            <person name="Suyama M."/>
            <person name="Miyajima N."/>
            <person name="Tanaka A."/>
            <person name="Kotani H."/>
            <person name="Nomura N."/>
            <person name="Ohara O."/>
        </authorList>
    </citation>
    <scope>NUCLEOTIDE SEQUENCE [LARGE SCALE MRNA] (ISOFORM 1)</scope>
    <source>
        <tissue>Brain</tissue>
    </source>
</reference>
<reference key="3">
    <citation type="submission" date="2003-01" db="EMBL/GenBank/DDBJ databases">
        <authorList>
            <person name="Ohara O."/>
            <person name="Suyama M."/>
            <person name="Nagase T."/>
            <person name="Ishikawa K."/>
        </authorList>
    </citation>
    <scope>SEQUENCE REVISION</scope>
</reference>
<reference key="4">
    <citation type="journal article" date="2004" name="Nat. Genet.">
        <title>Complete sequencing and characterization of 21,243 full-length human cDNAs.</title>
        <authorList>
            <person name="Ota T."/>
            <person name="Suzuki Y."/>
            <person name="Nishikawa T."/>
            <person name="Otsuki T."/>
            <person name="Sugiyama T."/>
            <person name="Irie R."/>
            <person name="Wakamatsu A."/>
            <person name="Hayashi K."/>
            <person name="Sato H."/>
            <person name="Nagai K."/>
            <person name="Kimura K."/>
            <person name="Makita H."/>
            <person name="Sekine M."/>
            <person name="Obayashi M."/>
            <person name="Nishi T."/>
            <person name="Shibahara T."/>
            <person name="Tanaka T."/>
            <person name="Ishii S."/>
            <person name="Yamamoto J."/>
            <person name="Saito K."/>
            <person name="Kawai Y."/>
            <person name="Isono Y."/>
            <person name="Nakamura Y."/>
            <person name="Nagahari K."/>
            <person name="Murakami K."/>
            <person name="Yasuda T."/>
            <person name="Iwayanagi T."/>
            <person name="Wagatsuma M."/>
            <person name="Shiratori A."/>
            <person name="Sudo H."/>
            <person name="Hosoiri T."/>
            <person name="Kaku Y."/>
            <person name="Kodaira H."/>
            <person name="Kondo H."/>
            <person name="Sugawara M."/>
            <person name="Takahashi M."/>
            <person name="Kanda K."/>
            <person name="Yokoi T."/>
            <person name="Furuya T."/>
            <person name="Kikkawa E."/>
            <person name="Omura Y."/>
            <person name="Abe K."/>
            <person name="Kamihara K."/>
            <person name="Katsuta N."/>
            <person name="Sato K."/>
            <person name="Tanikawa M."/>
            <person name="Yamazaki M."/>
            <person name="Ninomiya K."/>
            <person name="Ishibashi T."/>
            <person name="Yamashita H."/>
            <person name="Murakawa K."/>
            <person name="Fujimori K."/>
            <person name="Tanai H."/>
            <person name="Kimata M."/>
            <person name="Watanabe M."/>
            <person name="Hiraoka S."/>
            <person name="Chiba Y."/>
            <person name="Ishida S."/>
            <person name="Ono Y."/>
            <person name="Takiguchi S."/>
            <person name="Watanabe S."/>
            <person name="Yosida M."/>
            <person name="Hotuta T."/>
            <person name="Kusano J."/>
            <person name="Kanehori K."/>
            <person name="Takahashi-Fujii A."/>
            <person name="Hara H."/>
            <person name="Tanase T.-O."/>
            <person name="Nomura Y."/>
            <person name="Togiya S."/>
            <person name="Komai F."/>
            <person name="Hara R."/>
            <person name="Takeuchi K."/>
            <person name="Arita M."/>
            <person name="Imose N."/>
            <person name="Musashino K."/>
            <person name="Yuuki H."/>
            <person name="Oshima A."/>
            <person name="Sasaki N."/>
            <person name="Aotsuka S."/>
            <person name="Yoshikawa Y."/>
            <person name="Matsunawa H."/>
            <person name="Ichihara T."/>
            <person name="Shiohata N."/>
            <person name="Sano S."/>
            <person name="Moriya S."/>
            <person name="Momiyama H."/>
            <person name="Satoh N."/>
            <person name="Takami S."/>
            <person name="Terashima Y."/>
            <person name="Suzuki O."/>
            <person name="Nakagawa S."/>
            <person name="Senoh A."/>
            <person name="Mizoguchi H."/>
            <person name="Goto Y."/>
            <person name="Shimizu F."/>
            <person name="Wakebe H."/>
            <person name="Hishigaki H."/>
            <person name="Watanabe T."/>
            <person name="Sugiyama A."/>
            <person name="Takemoto M."/>
            <person name="Kawakami B."/>
            <person name="Yamazaki M."/>
            <person name="Watanabe K."/>
            <person name="Kumagai A."/>
            <person name="Itakura S."/>
            <person name="Fukuzumi Y."/>
            <person name="Fujimori Y."/>
            <person name="Komiyama M."/>
            <person name="Tashiro H."/>
            <person name="Tanigami A."/>
            <person name="Fujiwara T."/>
            <person name="Ono T."/>
            <person name="Yamada K."/>
            <person name="Fujii Y."/>
            <person name="Ozaki K."/>
            <person name="Hirao M."/>
            <person name="Ohmori Y."/>
            <person name="Kawabata A."/>
            <person name="Hikiji T."/>
            <person name="Kobatake N."/>
            <person name="Inagaki H."/>
            <person name="Ikema Y."/>
            <person name="Okamoto S."/>
            <person name="Okitani R."/>
            <person name="Kawakami T."/>
            <person name="Noguchi S."/>
            <person name="Itoh T."/>
            <person name="Shigeta K."/>
            <person name="Senba T."/>
            <person name="Matsumura K."/>
            <person name="Nakajima Y."/>
            <person name="Mizuno T."/>
            <person name="Morinaga M."/>
            <person name="Sasaki M."/>
            <person name="Togashi T."/>
            <person name="Oyama M."/>
            <person name="Hata H."/>
            <person name="Watanabe M."/>
            <person name="Komatsu T."/>
            <person name="Mizushima-Sugano J."/>
            <person name="Satoh T."/>
            <person name="Shirai Y."/>
            <person name="Takahashi Y."/>
            <person name="Nakagawa K."/>
            <person name="Okumura K."/>
            <person name="Nagase T."/>
            <person name="Nomura N."/>
            <person name="Kikuchi H."/>
            <person name="Masuho Y."/>
            <person name="Yamashita R."/>
            <person name="Nakai K."/>
            <person name="Yada T."/>
            <person name="Nakamura Y."/>
            <person name="Ohara O."/>
            <person name="Isogai T."/>
            <person name="Sugano S."/>
        </authorList>
    </citation>
    <scope>NUCLEOTIDE SEQUENCE [LARGE SCALE MRNA] (ISOFORM 2)</scope>
    <source>
        <tissue>Brain</tissue>
    </source>
</reference>
<reference key="5">
    <citation type="journal article" date="2006" name="Nature">
        <title>DNA sequence and analysis of human chromosome 8.</title>
        <authorList>
            <person name="Nusbaum C."/>
            <person name="Mikkelsen T.S."/>
            <person name="Zody M.C."/>
            <person name="Asakawa S."/>
            <person name="Taudien S."/>
            <person name="Garber M."/>
            <person name="Kodira C.D."/>
            <person name="Schueler M.G."/>
            <person name="Shimizu A."/>
            <person name="Whittaker C.A."/>
            <person name="Chang J.L."/>
            <person name="Cuomo C.A."/>
            <person name="Dewar K."/>
            <person name="FitzGerald M.G."/>
            <person name="Yang X."/>
            <person name="Allen N.R."/>
            <person name="Anderson S."/>
            <person name="Asakawa T."/>
            <person name="Blechschmidt K."/>
            <person name="Bloom T."/>
            <person name="Borowsky M.L."/>
            <person name="Butler J."/>
            <person name="Cook A."/>
            <person name="Corum B."/>
            <person name="DeArellano K."/>
            <person name="DeCaprio D."/>
            <person name="Dooley K.T."/>
            <person name="Dorris L. III"/>
            <person name="Engels R."/>
            <person name="Gloeckner G."/>
            <person name="Hafez N."/>
            <person name="Hagopian D.S."/>
            <person name="Hall J.L."/>
            <person name="Ishikawa S.K."/>
            <person name="Jaffe D.B."/>
            <person name="Kamat A."/>
            <person name="Kudoh J."/>
            <person name="Lehmann R."/>
            <person name="Lokitsang T."/>
            <person name="Macdonald P."/>
            <person name="Major J.E."/>
            <person name="Matthews C.D."/>
            <person name="Mauceli E."/>
            <person name="Menzel U."/>
            <person name="Mihalev A.H."/>
            <person name="Minoshima S."/>
            <person name="Murayama Y."/>
            <person name="Naylor J.W."/>
            <person name="Nicol R."/>
            <person name="Nguyen C."/>
            <person name="O'Leary S.B."/>
            <person name="O'Neill K."/>
            <person name="Parker S.C.J."/>
            <person name="Polley A."/>
            <person name="Raymond C.K."/>
            <person name="Reichwald K."/>
            <person name="Rodriguez J."/>
            <person name="Sasaki T."/>
            <person name="Schilhabel M."/>
            <person name="Siddiqui R."/>
            <person name="Smith C.L."/>
            <person name="Sneddon T.P."/>
            <person name="Talamas J.A."/>
            <person name="Tenzin P."/>
            <person name="Topham K."/>
            <person name="Venkataraman V."/>
            <person name="Wen G."/>
            <person name="Yamazaki S."/>
            <person name="Young S.K."/>
            <person name="Zeng Q."/>
            <person name="Zimmer A.R."/>
            <person name="Rosenthal A."/>
            <person name="Birren B.W."/>
            <person name="Platzer M."/>
            <person name="Shimizu N."/>
            <person name="Lander E.S."/>
        </authorList>
    </citation>
    <scope>NUCLEOTIDE SEQUENCE [LARGE SCALE GENOMIC DNA]</scope>
</reference>
<reference key="6">
    <citation type="journal article" date="2007" name="BMC Genomics">
        <title>The full-ORF clone resource of the German cDNA consortium.</title>
        <authorList>
            <person name="Bechtel S."/>
            <person name="Rosenfelder H."/>
            <person name="Duda A."/>
            <person name="Schmidt C.P."/>
            <person name="Ernst U."/>
            <person name="Wellenreuther R."/>
            <person name="Mehrle A."/>
            <person name="Schuster C."/>
            <person name="Bahr A."/>
            <person name="Bloecker H."/>
            <person name="Heubner D."/>
            <person name="Hoerlein A."/>
            <person name="Michel G."/>
            <person name="Wedler H."/>
            <person name="Koehrer K."/>
            <person name="Ottenwaelder B."/>
            <person name="Poustka A."/>
            <person name="Wiemann S."/>
            <person name="Schupp I."/>
        </authorList>
    </citation>
    <scope>NUCLEOTIDE SEQUENCE [LARGE SCALE MRNA] OF 1096-1826 (ISOFORM 1)</scope>
    <source>
        <tissue>Amygdala</tissue>
    </source>
</reference>
<reference key="7">
    <citation type="journal article" date="2008" name="J. Proteome Res.">
        <title>Phosphoproteome of resting human platelets.</title>
        <authorList>
            <person name="Zahedi R.P."/>
            <person name="Lewandrowski U."/>
            <person name="Wiesner J."/>
            <person name="Wortelkamp S."/>
            <person name="Moebius J."/>
            <person name="Schuetz C."/>
            <person name="Walter U."/>
            <person name="Gambaryan S."/>
            <person name="Sickmann A."/>
        </authorList>
    </citation>
    <scope>PHOSPHORYLATION [LARGE SCALE ANALYSIS] AT SER-1644</scope>
    <scope>IDENTIFICATION BY MASS SPECTROMETRY [LARGE SCALE ANALYSIS]</scope>
    <source>
        <tissue>Platelet</tissue>
    </source>
</reference>
<reference key="8">
    <citation type="journal article" date="2008" name="Proc. Natl. Acad. Sci. U.S.A.">
        <title>A quantitative atlas of mitotic phosphorylation.</title>
        <authorList>
            <person name="Dephoure N."/>
            <person name="Zhou C."/>
            <person name="Villen J."/>
            <person name="Beausoleil S.A."/>
            <person name="Bakalarski C.E."/>
            <person name="Elledge S.J."/>
            <person name="Gygi S.P."/>
        </authorList>
    </citation>
    <scope>PHOSPHORYLATION [LARGE SCALE ANALYSIS] AT SER-1379; SER-1382; SER-1432 AND SER-1438</scope>
    <scope>IDENTIFICATION BY MASS SPECTROMETRY [LARGE SCALE ANALYSIS]</scope>
    <source>
        <tissue>Cervix carcinoma</tissue>
    </source>
</reference>
<reference key="9">
    <citation type="journal article" date="2009" name="Sci. Signal.">
        <title>Quantitative phosphoproteomic analysis of T cell receptor signaling reveals system-wide modulation of protein-protein interactions.</title>
        <authorList>
            <person name="Mayya V."/>
            <person name="Lundgren D.H."/>
            <person name="Hwang S.-I."/>
            <person name="Rezaul K."/>
            <person name="Wu L."/>
            <person name="Eng J.K."/>
            <person name="Rodionov V."/>
            <person name="Han D.K."/>
        </authorList>
    </citation>
    <scope>PHOSPHORYLATION [LARGE SCALE ANALYSIS] AT SER-1410</scope>
    <scope>IDENTIFICATION BY MASS SPECTROMETRY [LARGE SCALE ANALYSIS]</scope>
    <source>
        <tissue>Leukemic T-cell</tissue>
    </source>
</reference>
<reference key="10">
    <citation type="journal article" date="2010" name="Mol. Cell. Biol.">
        <title>Par1b/MARK2 phosphorylates kinesin-like motor protein GAKIN/KIF13B to regulate axon formation.</title>
        <authorList>
            <person name="Yoshimura Y."/>
            <person name="Terabayashi T."/>
            <person name="Miki H."/>
        </authorList>
    </citation>
    <scope>FUNCTION</scope>
    <scope>SUBCELLULAR LOCATION</scope>
    <scope>INTERACTION WITH 14-3-3</scope>
    <scope>MUTAGENESIS OF SER-1381 AND SER-1410</scope>
    <scope>PHOSPHORYLATION AT SER-1381 AND SER-1410</scope>
</reference>
<reference key="11">
    <citation type="journal article" date="2010" name="Sci. Signal.">
        <title>Quantitative phosphoproteomics reveals widespread full phosphorylation site occupancy during mitosis.</title>
        <authorList>
            <person name="Olsen J.V."/>
            <person name="Vermeulen M."/>
            <person name="Santamaria A."/>
            <person name="Kumar C."/>
            <person name="Miller M.L."/>
            <person name="Jensen L.J."/>
            <person name="Gnad F."/>
            <person name="Cox J."/>
            <person name="Jensen T.S."/>
            <person name="Nigg E.A."/>
            <person name="Brunak S."/>
            <person name="Mann M."/>
        </authorList>
    </citation>
    <scope>PHOSPHORYLATION [LARGE SCALE ANALYSIS] AT SER-661</scope>
    <scope>IDENTIFICATION BY MASS SPECTROMETRY [LARGE SCALE ANALYSIS]</scope>
    <source>
        <tissue>Cervix carcinoma</tissue>
    </source>
</reference>
<reference key="12">
    <citation type="journal article" date="2011" name="BMC Syst. Biol.">
        <title>Initial characterization of the human central proteome.</title>
        <authorList>
            <person name="Burkard T.R."/>
            <person name="Planyavsky M."/>
            <person name="Kaupe I."/>
            <person name="Breitwieser F.P."/>
            <person name="Buerckstuemmer T."/>
            <person name="Bennett K.L."/>
            <person name="Superti-Furga G."/>
            <person name="Colinge J."/>
        </authorList>
    </citation>
    <scope>IDENTIFICATION BY MASS SPECTROMETRY [LARGE SCALE ANALYSIS]</scope>
</reference>
<reference key="13">
    <citation type="journal article" date="2013" name="J. Proteome Res.">
        <title>Toward a comprehensive characterization of a human cancer cell phosphoproteome.</title>
        <authorList>
            <person name="Zhou H."/>
            <person name="Di Palma S."/>
            <person name="Preisinger C."/>
            <person name="Peng M."/>
            <person name="Polat A.N."/>
            <person name="Heck A.J."/>
            <person name="Mohammed S."/>
        </authorList>
    </citation>
    <scope>PHOSPHORYLATION [LARGE SCALE ANALYSIS] AT SER-661; SER-1381; SER-1391; SER-1410; SER-1644 AND SER-1797</scope>
    <scope>IDENTIFICATION BY MASS SPECTROMETRY [LARGE SCALE ANALYSIS]</scope>
    <source>
        <tissue>Cervix carcinoma</tissue>
        <tissue>Erythroleukemia</tissue>
    </source>
</reference>
<reference key="14">
    <citation type="journal article" date="2014" name="J. Proteomics">
        <title>An enzyme assisted RP-RPLC approach for in-depth analysis of human liver phosphoproteome.</title>
        <authorList>
            <person name="Bian Y."/>
            <person name="Song C."/>
            <person name="Cheng K."/>
            <person name="Dong M."/>
            <person name="Wang F."/>
            <person name="Huang J."/>
            <person name="Sun D."/>
            <person name="Wang L."/>
            <person name="Ye M."/>
            <person name="Zou H."/>
        </authorList>
    </citation>
    <scope>PHOSPHORYLATION [LARGE SCALE ANALYSIS] AT SER-1410; SER-1537; THR-1545; SER-1559 AND SER-1797</scope>
    <scope>IDENTIFICATION BY MASS SPECTROMETRY [LARGE SCALE ANALYSIS]</scope>
    <source>
        <tissue>Liver</tissue>
    </source>
</reference>
<reference key="15">
    <citation type="submission" date="2005-11" db="PDB data bank">
        <title>Solution structure of the CAP-Gly domain in human kinesin-like protein KIF13B.</title>
        <authorList>
            <consortium name="RIKEN structural genomics initiative (RSGI)"/>
        </authorList>
    </citation>
    <scope>STRUCTURE BY NMR OF 1684-1771</scope>
</reference>
<evidence type="ECO:0000255" key="1"/>
<evidence type="ECO:0000255" key="2">
    <source>
        <dbReference type="PROSITE-ProRule" id="PRU00045"/>
    </source>
</evidence>
<evidence type="ECO:0000255" key="3">
    <source>
        <dbReference type="PROSITE-ProRule" id="PRU00283"/>
    </source>
</evidence>
<evidence type="ECO:0000256" key="4">
    <source>
        <dbReference type="SAM" id="MobiDB-lite"/>
    </source>
</evidence>
<evidence type="ECO:0000269" key="5">
    <source>
    </source>
</evidence>
<evidence type="ECO:0000269" key="6">
    <source>
    </source>
</evidence>
<evidence type="ECO:0000303" key="7">
    <source>
    </source>
</evidence>
<evidence type="ECO:0000305" key="8"/>
<evidence type="ECO:0007744" key="9">
    <source>
    </source>
</evidence>
<evidence type="ECO:0007744" key="10">
    <source>
    </source>
</evidence>
<evidence type="ECO:0007744" key="11">
    <source>
    </source>
</evidence>
<evidence type="ECO:0007744" key="12">
    <source>
    </source>
</evidence>
<evidence type="ECO:0007744" key="13">
    <source>
    </source>
</evidence>
<evidence type="ECO:0007744" key="14">
    <source>
    </source>
</evidence>
<evidence type="ECO:0007829" key="15">
    <source>
        <dbReference type="PDB" id="2COW"/>
    </source>
</evidence>
<evidence type="ECO:0007829" key="16">
    <source>
        <dbReference type="PDB" id="3FM8"/>
    </source>
</evidence>
<evidence type="ECO:0007829" key="17">
    <source>
        <dbReference type="PDB" id="3GBJ"/>
    </source>
</evidence>
<evidence type="ECO:0007829" key="18">
    <source>
        <dbReference type="PDB" id="3MDB"/>
    </source>
</evidence>
<feature type="chain" id="PRO_0000125448" description="Kinesin-like protein KIF13B">
    <location>
        <begin position="1"/>
        <end position="1826"/>
    </location>
</feature>
<feature type="domain" description="Kinesin motor" evidence="3">
    <location>
        <begin position="5"/>
        <end position="353"/>
    </location>
</feature>
<feature type="domain" description="FHA">
    <location>
        <begin position="471"/>
        <end position="535"/>
    </location>
</feature>
<feature type="domain" description="CAP-Gly" evidence="2">
    <location>
        <begin position="1721"/>
        <end position="1763"/>
    </location>
</feature>
<feature type="region of interest" description="Disordered" evidence="4">
    <location>
        <begin position="546"/>
        <end position="582"/>
    </location>
</feature>
<feature type="region of interest" description="Disordered" evidence="4">
    <location>
        <begin position="1367"/>
        <end position="1420"/>
    </location>
</feature>
<feature type="region of interest" description="Disordered" evidence="4">
    <location>
        <begin position="1579"/>
        <end position="1650"/>
    </location>
</feature>
<feature type="region of interest" description="Disordered" evidence="4">
    <location>
        <begin position="1662"/>
        <end position="1698"/>
    </location>
</feature>
<feature type="coiled-coil region" evidence="1">
    <location>
        <begin position="364"/>
        <end position="439"/>
    </location>
</feature>
<feature type="coiled-coil region" evidence="1">
    <location>
        <begin position="607"/>
        <end position="710"/>
    </location>
</feature>
<feature type="coiled-coil region" evidence="1">
    <location>
        <begin position="752"/>
        <end position="772"/>
    </location>
</feature>
<feature type="coiled-coil region" evidence="1">
    <location>
        <begin position="1096"/>
        <end position="1143"/>
    </location>
</feature>
<feature type="compositionally biased region" description="Polar residues" evidence="4">
    <location>
        <begin position="561"/>
        <end position="570"/>
    </location>
</feature>
<feature type="compositionally biased region" description="Polar residues" evidence="4">
    <location>
        <begin position="1378"/>
        <end position="1392"/>
    </location>
</feature>
<feature type="compositionally biased region" description="Polar residues" evidence="4">
    <location>
        <begin position="1409"/>
        <end position="1420"/>
    </location>
</feature>
<feature type="compositionally biased region" description="Low complexity" evidence="4">
    <location>
        <begin position="1579"/>
        <end position="1607"/>
    </location>
</feature>
<feature type="compositionally biased region" description="Pro residues" evidence="4">
    <location>
        <begin position="1608"/>
        <end position="1624"/>
    </location>
</feature>
<feature type="compositionally biased region" description="Low complexity" evidence="4">
    <location>
        <begin position="1671"/>
        <end position="1688"/>
    </location>
</feature>
<feature type="binding site" evidence="3">
    <location>
        <begin position="103"/>
        <end position="110"/>
    </location>
    <ligand>
        <name>ATP</name>
        <dbReference type="ChEBI" id="CHEBI:30616"/>
    </ligand>
</feature>
<feature type="modified residue" description="Phosphoserine" evidence="12 13">
    <location>
        <position position="661"/>
    </location>
</feature>
<feature type="modified residue" description="Phosphoserine" evidence="10">
    <location>
        <position position="1379"/>
    </location>
</feature>
<feature type="modified residue" description="Phosphoserine; by MARK2" evidence="6 13">
    <location>
        <position position="1381"/>
    </location>
</feature>
<feature type="modified residue" description="Phosphoserine" evidence="10">
    <location>
        <position position="1382"/>
    </location>
</feature>
<feature type="modified residue" description="Phosphoserine" evidence="13">
    <location>
        <position position="1391"/>
    </location>
</feature>
<feature type="modified residue" description="Phosphoserine; by MARK2" evidence="6 11 13 14">
    <location>
        <position position="1410"/>
    </location>
</feature>
<feature type="modified residue" description="Phosphoserine" evidence="10">
    <location>
        <position position="1432"/>
    </location>
</feature>
<feature type="modified residue" description="Phosphoserine" evidence="10">
    <location>
        <position position="1438"/>
    </location>
</feature>
<feature type="modified residue" description="Phosphoserine" evidence="14">
    <location>
        <position position="1537"/>
    </location>
</feature>
<feature type="modified residue" description="Phosphothreonine" evidence="14">
    <location>
        <position position="1545"/>
    </location>
</feature>
<feature type="modified residue" description="Phosphoserine" evidence="14">
    <location>
        <position position="1559"/>
    </location>
</feature>
<feature type="modified residue" description="Phosphoserine" evidence="9 13">
    <location>
        <position position="1644"/>
    </location>
</feature>
<feature type="modified residue" description="Phosphoserine" evidence="13 14">
    <location>
        <position position="1797"/>
    </location>
</feature>
<feature type="splice variant" id="VSP_056360" description="In isoform 2." evidence="7">
    <location>
        <begin position="1"/>
        <end position="1460"/>
    </location>
</feature>
<feature type="splice variant" id="VSP_056361" description="In isoform 2." evidence="7">
    <location>
        <begin position="1487"/>
        <end position="1507"/>
    </location>
</feature>
<feature type="sequence variant" id="VAR_055982" description="In dbSNP:rs17526980.">
    <original>V</original>
    <variation>I</variation>
    <location>
        <position position="1471"/>
    </location>
</feature>
<feature type="mutagenesis site" description="Abolishes phosphorylation by MARK2; when associated with A-1410." evidence="6">
    <original>S</original>
    <variation>A</variation>
    <location>
        <position position="1381"/>
    </location>
</feature>
<feature type="mutagenesis site" description="Abolishes phosphorylation by MARK2; when associated with A-1389." evidence="6">
    <original>S</original>
    <variation>A</variation>
    <location>
        <position position="1410"/>
    </location>
</feature>
<feature type="sequence conflict" description="In Ref. 1; AAF81263." evidence="8" ref="1">
    <original>V</original>
    <variation>C</variation>
    <location>
        <position position="55"/>
    </location>
</feature>
<feature type="sequence conflict" description="In Ref. 1; AAF81263." evidence="8" ref="1">
    <original>V</original>
    <variation>A</variation>
    <location>
        <position position="191"/>
    </location>
</feature>
<feature type="sequence conflict" description="In Ref. 1; AAF81263." evidence="8" ref="1">
    <original>F</original>
    <variation>L</variation>
    <location>
        <position position="226"/>
    </location>
</feature>
<feature type="sequence conflict" description="In Ref. 1; AAF81263." evidence="8" ref="1">
    <original>V</original>
    <variation>A</variation>
    <location>
        <position position="237"/>
    </location>
</feature>
<feature type="sequence conflict" description="In Ref. 1; AAF81263." evidence="8" ref="1">
    <original>K</original>
    <variation>E</variation>
    <location>
        <position position="278"/>
    </location>
</feature>
<feature type="sequence conflict" description="In Ref. 1; AAF81263." evidence="8" ref="1">
    <original>H</original>
    <variation>N</variation>
    <location>
        <position position="356"/>
    </location>
</feature>
<feature type="sequence conflict" description="In Ref. 1; AAF81263." evidence="8" ref="1">
    <original>H</original>
    <variation>L</variation>
    <location>
        <position position="797"/>
    </location>
</feature>
<feature type="sequence conflict" description="In Ref. 1; AAF81263." evidence="8" ref="1">
    <original>S</original>
    <variation>P</variation>
    <location>
        <position position="858"/>
    </location>
</feature>
<feature type="strand" evidence="17">
    <location>
        <begin position="6"/>
        <end position="12"/>
    </location>
</feature>
<feature type="helix" evidence="17">
    <location>
        <begin position="17"/>
        <end position="22"/>
    </location>
</feature>
<feature type="strand" evidence="17">
    <location>
        <begin position="28"/>
        <end position="31"/>
    </location>
</feature>
<feature type="strand" evidence="17">
    <location>
        <begin position="34"/>
        <end position="37"/>
    </location>
</feature>
<feature type="strand" evidence="17">
    <location>
        <begin position="54"/>
        <end position="57"/>
    </location>
</feature>
<feature type="strand" evidence="17">
    <location>
        <begin position="59"/>
        <end position="63"/>
    </location>
</feature>
<feature type="turn" evidence="17">
    <location>
        <begin position="70"/>
        <end position="72"/>
    </location>
</feature>
<feature type="helix" evidence="17">
    <location>
        <begin position="76"/>
        <end position="92"/>
    </location>
</feature>
<feature type="strand" evidence="17">
    <location>
        <begin position="97"/>
        <end position="103"/>
    </location>
</feature>
<feature type="helix" evidence="17">
    <location>
        <begin position="109"/>
        <end position="113"/>
    </location>
</feature>
<feature type="strand" evidence="17">
    <location>
        <begin position="117"/>
        <end position="120"/>
    </location>
</feature>
<feature type="helix" evidence="17">
    <location>
        <begin position="122"/>
        <end position="137"/>
    </location>
</feature>
<feature type="strand" evidence="17">
    <location>
        <begin position="142"/>
        <end position="154"/>
    </location>
</feature>
<feature type="strand" evidence="17">
    <location>
        <begin position="157"/>
        <end position="160"/>
    </location>
</feature>
<feature type="strand" evidence="17">
    <location>
        <begin position="189"/>
        <end position="191"/>
    </location>
</feature>
<feature type="helix" evidence="17">
    <location>
        <begin position="194"/>
        <end position="206"/>
    </location>
</feature>
<feature type="strand" evidence="17">
    <location>
        <begin position="222"/>
        <end position="235"/>
    </location>
</feature>
<feature type="strand" evidence="17">
    <location>
        <begin position="241"/>
        <end position="253"/>
    </location>
</feature>
<feature type="helix" evidence="17">
    <location>
        <begin position="272"/>
        <end position="292"/>
    </location>
</feature>
<feature type="helix" evidence="17">
    <location>
        <begin position="305"/>
        <end position="307"/>
    </location>
</feature>
<feature type="helix" evidence="17">
    <location>
        <begin position="309"/>
        <end position="313"/>
    </location>
</feature>
<feature type="helix" evidence="17">
    <location>
        <begin position="315"/>
        <end position="318"/>
    </location>
</feature>
<feature type="strand" evidence="17">
    <location>
        <begin position="323"/>
        <end position="330"/>
    </location>
</feature>
<feature type="helix" evidence="17">
    <location>
        <begin position="334"/>
        <end position="336"/>
    </location>
</feature>
<feature type="helix" evidence="17">
    <location>
        <begin position="337"/>
        <end position="350"/>
    </location>
</feature>
<feature type="strand" evidence="16">
    <location>
        <begin position="449"/>
        <end position="452"/>
    </location>
</feature>
<feature type="turn" evidence="18">
    <location>
        <begin position="457"/>
        <end position="460"/>
    </location>
</feature>
<feature type="strand" evidence="16">
    <location>
        <begin position="464"/>
        <end position="466"/>
    </location>
</feature>
<feature type="strand" evidence="16">
    <location>
        <begin position="469"/>
        <end position="476"/>
    </location>
</feature>
<feature type="strand" evidence="16">
    <location>
        <begin position="480"/>
        <end position="482"/>
    </location>
</feature>
<feature type="strand" evidence="16">
    <location>
        <begin position="493"/>
        <end position="497"/>
    </location>
</feature>
<feature type="strand" evidence="16">
    <location>
        <begin position="503"/>
        <end position="507"/>
    </location>
</feature>
<feature type="strand" evidence="16">
    <location>
        <begin position="513"/>
        <end position="515"/>
    </location>
</feature>
<feature type="strand" evidence="16">
    <location>
        <begin position="524"/>
        <end position="526"/>
    </location>
</feature>
<feature type="strand" evidence="16">
    <location>
        <begin position="531"/>
        <end position="534"/>
    </location>
</feature>
<feature type="turn" evidence="16">
    <location>
        <begin position="535"/>
        <end position="537"/>
    </location>
</feature>
<feature type="strand" evidence="16">
    <location>
        <begin position="538"/>
        <end position="543"/>
    </location>
</feature>
<feature type="strand" evidence="15">
    <location>
        <begin position="1706"/>
        <end position="1708"/>
    </location>
</feature>
<feature type="strand" evidence="15">
    <location>
        <begin position="1710"/>
        <end position="1712"/>
    </location>
</feature>
<feature type="strand" evidence="15">
    <location>
        <begin position="1714"/>
        <end position="1721"/>
    </location>
</feature>
<feature type="strand" evidence="15">
    <location>
        <begin position="1724"/>
        <end position="1728"/>
    </location>
</feature>
<feature type="strand" evidence="15">
    <location>
        <begin position="1730"/>
        <end position="1734"/>
    </location>
</feature>
<feature type="strand" evidence="15">
    <location>
        <begin position="1736"/>
        <end position="1738"/>
    </location>
</feature>
<feature type="strand" evidence="15">
    <location>
        <begin position="1743"/>
        <end position="1746"/>
    </location>
</feature>
<feature type="strand" evidence="15">
    <location>
        <begin position="1760"/>
        <end position="1762"/>
    </location>
</feature>
<feature type="helix" evidence="15">
    <location>
        <begin position="1764"/>
        <end position="1766"/>
    </location>
</feature>
<sequence>MGDSKVKVAVRIRPMNRRETDLHTKCVVDVDANKVILNPVNTNLSKGDARGQPKVFAYDHCFWSMDESVKEKYAGQDIVFKCLGENILQNAFDGYNACIFAYGQTGSGKSYTMMGTADQPGLIPRLCSGLFERTQKEENEEQSFKVEVSYMEIYNEKVRDLLDPKGSRQTLKVREHSVLGPYVDGLSKLAVTSYKDIESLMSEGNKSRTVAATNMNEESSRSHAVFKITLTHTLYDVKSGTSGEKVGKLSLVDLAGSERATKTGAAGDRLKEGSNINKSLTTLGLVISALADQSAGKNKNKFVPYRDSVLTWLLKDSLGGNSKTAMVATVSPAADNYDETLSTLRYADRAKHIVNHAVVNEDPNARIIRDLREEVEKLREQLTKAEAMKSPELKDRLEESEKLIQEMTVTWEEKLRKTEEIAQERQKQLESLGISLQSSGIKVGDDKCFLVNLNADPALNELLVYYLKEHTLIGSANSQDIQLCGMGILPEHCIIDITSEGQVMLTPQKNTRTFVNGSSVSSPIQLHHGDRILWGNNHFFRLNLPKKKKKAEREDEDQDPSMKNENSSEQLDVDGDSSSEVSSEVNFNYEYAQMEVTMKALGSNDPMQSILNSLEQQHEEEKRSALERQRLMYEHELEQLRRRLSPEKQNCRSMDRFSFHSPSAQQRLRQWAEEREATLNNSLMRLREQIVKANLLVREANYIAEELDKRTEYKVTLQIPASSLDANRKRGSLLSEPAIQVRRKGKGKQIWSLEKLDNRLLDMRDLYQEWKECEEDNPVIRSYFKRADPFYDEQENHSLIGVANVFLESLFYDVKLQYAVPIINQKGEVAGRLHVEVMRLSGDVGERIAGGDEVAEVSFEKETQENKLVCMVKILQATGLPQHLSHFVFCKYSFWDQQEPVIVAPEVDTSSSSVSKEPHCMVVFDHCNEFSVNITEDFIEHLSEGALAIEVYGHKINDPRKNPALWDLGIIQAKTRSLRDRWSEVTRKLEFWVQILEQNENGEYCPVEVISAKDVPTGGIFQLRQGQSRRVQVEVKSVQESGTLPLMEECILSVGIGCVKVRPLRAPRTHETFHEEEEDMDSYQDRDLERLRRKWLNALTKRQEYLDQQLQKLVSKRDKTEDDADREAQLLEMRLTLTEERNAVMVPSAGSGIPGAPAEWTPVPGMETHIPVIFLDLNADDFSSQDNLDDPEAGGWDATLTGEEEEEFFELQIVKQHDGEVKAEASWDSAVHGCPQLSRGTPVDERLFLIVRVTVQLSHPADMQLVLRKRICVNVHGRQGFAQSLLKKMSHRSSIPGCGVTFEIVSNIPEDAQGVEEREALARMAANVENPASADSEAYIEKYLRSVLAVENLLTLDRLRQEVAVKEQLTGKGKLSRRSISSPNVNRLSGSRQDLIPSYSLGSNKGRWESQQDVSQTTVSRGIAPAPALSVSPQNNHSPDPGLSNLAASYLNPVKSFVPQMPKLLKSLFPVRDEKRGKRPSPLAHQPVPRIMVQSASPDIRVTRMEEAQPEMGPDVLVQTMGAPALKICDKPAKVPSPPPVIAVTAVTPAPEAQDGPPSPLSEASSGYFSHSVSTATLSDALGPGLDAAAPPGSMPTAPEAEPEAPISHPPPPTAVPAEEPPGPQQLVSPGRERPDLEAPAPGSPFRVRRVRASELRSFSRMLAGDPGCSPGAEGNAPAPGAGGQALASDSEEADEVPEWLREGEFVTVGAHKTGVVRYVGPADFQEGTWVGVELDLPSGKNDGSIGGKQYFRCNPGYGLLVRPSRVRRATGPVRRRSTGLRLGAPEARRSATLSGSATNLASLTAALAKADRSHKNPENRKSWAS</sequence>
<accession>Q9NQT8</accession>
<accession>B4DGY5</accession>
<accession>B5MC45</accession>
<accession>F8VPJ2</accession>
<accession>O75134</accession>
<accession>Q9BYJ6</accession>
<dbReference type="EMBL" id="AF279865">
    <property type="protein sequence ID" value="AAF81263.1"/>
    <property type="molecule type" value="mRNA"/>
</dbReference>
<dbReference type="EMBL" id="AB014539">
    <property type="protein sequence ID" value="BAA31614.3"/>
    <property type="status" value="ALT_INIT"/>
    <property type="molecule type" value="mRNA"/>
</dbReference>
<dbReference type="EMBL" id="AK294837">
    <property type="protein sequence ID" value="BAG57946.1"/>
    <property type="molecule type" value="mRNA"/>
</dbReference>
<dbReference type="EMBL" id="AC084262">
    <property type="status" value="NOT_ANNOTATED_CDS"/>
    <property type="molecule type" value="Genomic_DNA"/>
</dbReference>
<dbReference type="EMBL" id="AC103830">
    <property type="status" value="NOT_ANNOTATED_CDS"/>
    <property type="molecule type" value="Genomic_DNA"/>
</dbReference>
<dbReference type="EMBL" id="AC108449">
    <property type="status" value="NOT_ANNOTATED_CDS"/>
    <property type="molecule type" value="Genomic_DNA"/>
</dbReference>
<dbReference type="EMBL" id="AL583912">
    <property type="protein sequence ID" value="CAC29496.1"/>
    <property type="molecule type" value="mRNA"/>
</dbReference>
<dbReference type="CCDS" id="CCDS55217.1">
    <molecule id="Q9NQT8-1"/>
</dbReference>
<dbReference type="RefSeq" id="NP_056069.2">
    <molecule id="Q9NQT8-1"/>
    <property type="nucleotide sequence ID" value="NM_015254.3"/>
</dbReference>
<dbReference type="PDB" id="2COW">
    <property type="method" value="NMR"/>
    <property type="chains" value="A=1685-1771"/>
</dbReference>
<dbReference type="PDB" id="3FM8">
    <property type="method" value="X-ray"/>
    <property type="resolution" value="2.30 A"/>
    <property type="chains" value="A/B=440-545"/>
</dbReference>
<dbReference type="PDB" id="3GBJ">
    <property type="method" value="X-ray"/>
    <property type="resolution" value="2.10 A"/>
    <property type="chains" value="A/B/C=4-352"/>
</dbReference>
<dbReference type="PDB" id="3MDB">
    <property type="method" value="X-ray"/>
    <property type="resolution" value="2.95 A"/>
    <property type="chains" value="A/B=440-545"/>
</dbReference>
<dbReference type="PDBsum" id="2COW"/>
<dbReference type="PDBsum" id="3FM8"/>
<dbReference type="PDBsum" id="3GBJ"/>
<dbReference type="PDBsum" id="3MDB"/>
<dbReference type="SMR" id="Q9NQT8"/>
<dbReference type="BioGRID" id="116895">
    <property type="interactions" value="146"/>
</dbReference>
<dbReference type="DIP" id="DIP-34586N"/>
<dbReference type="FunCoup" id="Q9NQT8">
    <property type="interactions" value="588"/>
</dbReference>
<dbReference type="IntAct" id="Q9NQT8">
    <property type="interactions" value="33"/>
</dbReference>
<dbReference type="STRING" id="9606.ENSP00000427900"/>
<dbReference type="GlyCosmos" id="Q9NQT8">
    <property type="glycosylation" value="1 site, 1 glycan"/>
</dbReference>
<dbReference type="GlyGen" id="Q9NQT8">
    <property type="glycosylation" value="3 sites, 1 O-linked glycan (1 site)"/>
</dbReference>
<dbReference type="iPTMnet" id="Q9NQT8"/>
<dbReference type="MetOSite" id="Q9NQT8"/>
<dbReference type="PhosphoSitePlus" id="Q9NQT8"/>
<dbReference type="SwissPalm" id="Q9NQT8"/>
<dbReference type="BioMuta" id="KIF13B"/>
<dbReference type="DMDM" id="519668668"/>
<dbReference type="jPOST" id="Q9NQT8"/>
<dbReference type="MassIVE" id="Q9NQT8"/>
<dbReference type="PaxDb" id="9606-ENSP00000427900"/>
<dbReference type="PeptideAtlas" id="Q9NQT8"/>
<dbReference type="ProteomicsDB" id="28292"/>
<dbReference type="ProteomicsDB" id="4171"/>
<dbReference type="ProteomicsDB" id="82187">
    <molecule id="Q9NQT8-1"/>
</dbReference>
<dbReference type="Pumba" id="Q9NQT8"/>
<dbReference type="Antibodypedia" id="5396">
    <property type="antibodies" value="157 antibodies from 28 providers"/>
</dbReference>
<dbReference type="DNASU" id="23303"/>
<dbReference type="Ensembl" id="ENST00000524189.6">
    <molecule id="Q9NQT8-1"/>
    <property type="protein sequence ID" value="ENSP00000427900.1"/>
    <property type="gene ID" value="ENSG00000197892.13"/>
</dbReference>
<dbReference type="GeneID" id="23303"/>
<dbReference type="KEGG" id="hsa:23303"/>
<dbReference type="MANE-Select" id="ENST00000524189.6">
    <property type="protein sequence ID" value="ENSP00000427900.1"/>
    <property type="RefSeq nucleotide sequence ID" value="NM_015254.4"/>
    <property type="RefSeq protein sequence ID" value="NP_056069.2"/>
</dbReference>
<dbReference type="UCSC" id="uc003xhh.5">
    <molecule id="Q9NQT8-1"/>
    <property type="organism name" value="human"/>
</dbReference>
<dbReference type="AGR" id="HGNC:14405"/>
<dbReference type="CTD" id="23303"/>
<dbReference type="DisGeNET" id="23303"/>
<dbReference type="GeneCards" id="KIF13B"/>
<dbReference type="HGNC" id="HGNC:14405">
    <property type="gene designation" value="KIF13B"/>
</dbReference>
<dbReference type="HPA" id="ENSG00000197892">
    <property type="expression patterns" value="Tissue enriched (parathyroid)"/>
</dbReference>
<dbReference type="MIM" id="607350">
    <property type="type" value="gene"/>
</dbReference>
<dbReference type="neXtProt" id="NX_Q9NQT8"/>
<dbReference type="OpenTargets" id="ENSG00000197892"/>
<dbReference type="PharmGKB" id="PA30099"/>
<dbReference type="VEuPathDB" id="HostDB:ENSG00000197892"/>
<dbReference type="eggNOG" id="KOG0241">
    <property type="taxonomic scope" value="Eukaryota"/>
</dbReference>
<dbReference type="GeneTree" id="ENSGT00940000155500"/>
<dbReference type="HOGENOM" id="CLU_001485_29_2_1"/>
<dbReference type="InParanoid" id="Q9NQT8"/>
<dbReference type="OMA" id="LVCSIKI"/>
<dbReference type="OrthoDB" id="3176171at2759"/>
<dbReference type="PAN-GO" id="Q9NQT8">
    <property type="GO annotations" value="6 GO annotations based on evolutionary models"/>
</dbReference>
<dbReference type="PhylomeDB" id="Q9NQT8"/>
<dbReference type="TreeFam" id="TF105221"/>
<dbReference type="PathwayCommons" id="Q9NQT8"/>
<dbReference type="Reactome" id="R-HSA-6811434">
    <property type="pathway name" value="COPI-dependent Golgi-to-ER retrograde traffic"/>
</dbReference>
<dbReference type="Reactome" id="R-HSA-983189">
    <property type="pathway name" value="Kinesins"/>
</dbReference>
<dbReference type="SignaLink" id="Q9NQT8"/>
<dbReference type="SIGNOR" id="Q9NQT8"/>
<dbReference type="BioGRID-ORCS" id="23303">
    <property type="hits" value="17 hits in 1155 CRISPR screens"/>
</dbReference>
<dbReference type="CD-CODE" id="DEE660B4">
    <property type="entry name" value="Stress granule"/>
</dbReference>
<dbReference type="ChiTaRS" id="KIF13B">
    <property type="organism name" value="human"/>
</dbReference>
<dbReference type="EvolutionaryTrace" id="Q9NQT8"/>
<dbReference type="GenomeRNAi" id="23303"/>
<dbReference type="Pharos" id="Q9NQT8">
    <property type="development level" value="Tbio"/>
</dbReference>
<dbReference type="PRO" id="PR:Q9NQT8"/>
<dbReference type="Proteomes" id="UP000005640">
    <property type="component" value="Chromosome 8"/>
</dbReference>
<dbReference type="RNAct" id="Q9NQT8">
    <property type="molecule type" value="protein"/>
</dbReference>
<dbReference type="Bgee" id="ENSG00000197892">
    <property type="expression patterns" value="Expressed in olfactory bulb and 207 other cell types or tissues"/>
</dbReference>
<dbReference type="ExpressionAtlas" id="Q9NQT8">
    <property type="expression patterns" value="baseline and differential"/>
</dbReference>
<dbReference type="GO" id="GO:0030424">
    <property type="term" value="C:axon"/>
    <property type="evidence" value="ECO:0000314"/>
    <property type="project" value="UniProtKB"/>
</dbReference>
<dbReference type="GO" id="GO:0005737">
    <property type="term" value="C:cytoplasm"/>
    <property type="evidence" value="ECO:0000314"/>
    <property type="project" value="UniProtKB"/>
</dbReference>
<dbReference type="GO" id="GO:0005871">
    <property type="term" value="C:kinesin complex"/>
    <property type="evidence" value="ECO:0000318"/>
    <property type="project" value="GO_Central"/>
</dbReference>
<dbReference type="GO" id="GO:0005874">
    <property type="term" value="C:microtubule"/>
    <property type="evidence" value="ECO:0000318"/>
    <property type="project" value="GO_Central"/>
</dbReference>
<dbReference type="GO" id="GO:0071889">
    <property type="term" value="F:14-3-3 protein binding"/>
    <property type="evidence" value="ECO:0000314"/>
    <property type="project" value="UniProtKB"/>
</dbReference>
<dbReference type="GO" id="GO:0005524">
    <property type="term" value="F:ATP binding"/>
    <property type="evidence" value="ECO:0007669"/>
    <property type="project" value="UniProtKB-KW"/>
</dbReference>
<dbReference type="GO" id="GO:0016887">
    <property type="term" value="F:ATP hydrolysis activity"/>
    <property type="evidence" value="ECO:0000318"/>
    <property type="project" value="GO_Central"/>
</dbReference>
<dbReference type="GO" id="GO:0008017">
    <property type="term" value="F:microtubule binding"/>
    <property type="evidence" value="ECO:0000318"/>
    <property type="project" value="GO_Central"/>
</dbReference>
<dbReference type="GO" id="GO:0003777">
    <property type="term" value="F:microtubule motor activity"/>
    <property type="evidence" value="ECO:0000318"/>
    <property type="project" value="GO_Central"/>
</dbReference>
<dbReference type="GO" id="GO:0019901">
    <property type="term" value="F:protein kinase binding"/>
    <property type="evidence" value="ECO:0000353"/>
    <property type="project" value="UniProtKB"/>
</dbReference>
<dbReference type="GO" id="GO:0007018">
    <property type="term" value="P:microtubule-based movement"/>
    <property type="evidence" value="ECO:0000318"/>
    <property type="project" value="GO_Central"/>
</dbReference>
<dbReference type="GO" id="GO:0006605">
    <property type="term" value="P:protein targeting"/>
    <property type="evidence" value="ECO:0000304"/>
    <property type="project" value="UniProtKB"/>
</dbReference>
<dbReference type="GO" id="GO:0050770">
    <property type="term" value="P:regulation of axonogenesis"/>
    <property type="evidence" value="ECO:0000314"/>
    <property type="project" value="UniProtKB"/>
</dbReference>
<dbReference type="GO" id="GO:0007165">
    <property type="term" value="P:signal transduction"/>
    <property type="evidence" value="ECO:0000303"/>
    <property type="project" value="UniProtKB"/>
</dbReference>
<dbReference type="GO" id="GO:0042110">
    <property type="term" value="P:T cell activation"/>
    <property type="evidence" value="ECO:0000303"/>
    <property type="project" value="UniProtKB"/>
</dbReference>
<dbReference type="CDD" id="cd22730">
    <property type="entry name" value="FHA_KIF13B"/>
    <property type="match status" value="1"/>
</dbReference>
<dbReference type="CDD" id="cd01365">
    <property type="entry name" value="KISc_KIF1A_KIF1B"/>
    <property type="match status" value="1"/>
</dbReference>
<dbReference type="FunFam" id="2.60.200.20:FF:000002">
    <property type="entry name" value="Kinesin family member 13A"/>
    <property type="match status" value="1"/>
</dbReference>
<dbReference type="FunFam" id="3.40.850.10:FF:000010">
    <property type="entry name" value="Kinesin family member 13A"/>
    <property type="match status" value="1"/>
</dbReference>
<dbReference type="FunFam" id="2.30.30.190:FF:000009">
    <property type="entry name" value="Kinesin family member 13B"/>
    <property type="match status" value="1"/>
</dbReference>
<dbReference type="Gene3D" id="2.60.200.20">
    <property type="match status" value="1"/>
</dbReference>
<dbReference type="Gene3D" id="6.10.250.2520">
    <property type="match status" value="1"/>
</dbReference>
<dbReference type="Gene3D" id="2.30.30.190">
    <property type="entry name" value="CAP Gly-rich-like domain"/>
    <property type="match status" value="1"/>
</dbReference>
<dbReference type="Gene3D" id="3.40.850.10">
    <property type="entry name" value="Kinesin motor domain"/>
    <property type="match status" value="1"/>
</dbReference>
<dbReference type="InterPro" id="IPR036859">
    <property type="entry name" value="CAP-Gly_dom_sf"/>
</dbReference>
<dbReference type="InterPro" id="IPR000938">
    <property type="entry name" value="CAP-Gly_domain"/>
</dbReference>
<dbReference type="InterPro" id="IPR000253">
    <property type="entry name" value="FHA_dom"/>
</dbReference>
<dbReference type="InterPro" id="IPR022164">
    <property type="entry name" value="Kinesin-like"/>
</dbReference>
<dbReference type="InterPro" id="IPR022140">
    <property type="entry name" value="Kinesin-like_KIF1-typ"/>
</dbReference>
<dbReference type="InterPro" id="IPR032405">
    <property type="entry name" value="Kinesin_assoc"/>
</dbReference>
<dbReference type="InterPro" id="IPR019821">
    <property type="entry name" value="Kinesin_motor_CS"/>
</dbReference>
<dbReference type="InterPro" id="IPR001752">
    <property type="entry name" value="Kinesin_motor_dom"/>
</dbReference>
<dbReference type="InterPro" id="IPR036961">
    <property type="entry name" value="Kinesin_motor_dom_sf"/>
</dbReference>
<dbReference type="InterPro" id="IPR027417">
    <property type="entry name" value="P-loop_NTPase"/>
</dbReference>
<dbReference type="InterPro" id="IPR008984">
    <property type="entry name" value="SMAD_FHA_dom_sf"/>
</dbReference>
<dbReference type="PANTHER" id="PTHR47117">
    <property type="entry name" value="STAR-RELATED LIPID TRANSFER PROTEIN 9"/>
    <property type="match status" value="1"/>
</dbReference>
<dbReference type="Pfam" id="PF01302">
    <property type="entry name" value="CAP_GLY"/>
    <property type="match status" value="1"/>
</dbReference>
<dbReference type="Pfam" id="PF12473">
    <property type="entry name" value="DUF3694"/>
    <property type="match status" value="2"/>
</dbReference>
<dbReference type="Pfam" id="PF00498">
    <property type="entry name" value="FHA"/>
    <property type="match status" value="1"/>
</dbReference>
<dbReference type="Pfam" id="PF12423">
    <property type="entry name" value="KIF1B"/>
    <property type="match status" value="1"/>
</dbReference>
<dbReference type="Pfam" id="PF00225">
    <property type="entry name" value="Kinesin"/>
    <property type="match status" value="1"/>
</dbReference>
<dbReference type="Pfam" id="PF16183">
    <property type="entry name" value="Kinesin_assoc"/>
    <property type="match status" value="1"/>
</dbReference>
<dbReference type="PRINTS" id="PR00380">
    <property type="entry name" value="KINESINHEAVY"/>
</dbReference>
<dbReference type="SMART" id="SM01052">
    <property type="entry name" value="CAP_GLY"/>
    <property type="match status" value="1"/>
</dbReference>
<dbReference type="SMART" id="SM00129">
    <property type="entry name" value="KISc"/>
    <property type="match status" value="1"/>
</dbReference>
<dbReference type="SUPFAM" id="SSF74924">
    <property type="entry name" value="Cap-Gly domain"/>
    <property type="match status" value="1"/>
</dbReference>
<dbReference type="SUPFAM" id="SSF52540">
    <property type="entry name" value="P-loop containing nucleoside triphosphate hydrolases"/>
    <property type="match status" value="1"/>
</dbReference>
<dbReference type="SUPFAM" id="SSF49879">
    <property type="entry name" value="SMAD/FHA domain"/>
    <property type="match status" value="1"/>
</dbReference>
<dbReference type="PROSITE" id="PS00845">
    <property type="entry name" value="CAP_GLY_1"/>
    <property type="match status" value="1"/>
</dbReference>
<dbReference type="PROSITE" id="PS50245">
    <property type="entry name" value="CAP_GLY_2"/>
    <property type="match status" value="1"/>
</dbReference>
<dbReference type="PROSITE" id="PS00411">
    <property type="entry name" value="KINESIN_MOTOR_1"/>
    <property type="match status" value="1"/>
</dbReference>
<dbReference type="PROSITE" id="PS50067">
    <property type="entry name" value="KINESIN_MOTOR_2"/>
    <property type="match status" value="1"/>
</dbReference>
<gene>
    <name type="primary">KIF13B</name>
    <name type="synonym">GAKIN</name>
    <name type="synonym">KIAA0639</name>
</gene>
<name>KI13B_HUMAN</name>